<dbReference type="EMBL" id="CP000552">
    <property type="protein sequence ID" value="ABM71280.1"/>
    <property type="molecule type" value="Genomic_DNA"/>
</dbReference>
<dbReference type="RefSeq" id="WP_011819397.1">
    <property type="nucleotide sequence ID" value="NC_008817.1"/>
</dbReference>
<dbReference type="SMR" id="A2BU19"/>
<dbReference type="STRING" id="167542.P9515_00711"/>
<dbReference type="GeneID" id="60201273"/>
<dbReference type="KEGG" id="pmc:P9515_00711"/>
<dbReference type="HOGENOM" id="CLU_209178_0_0_3"/>
<dbReference type="OrthoDB" id="541645at2"/>
<dbReference type="Proteomes" id="UP000001589">
    <property type="component" value="Chromosome"/>
</dbReference>
<dbReference type="GO" id="GO:0009523">
    <property type="term" value="C:photosystem II"/>
    <property type="evidence" value="ECO:0007669"/>
    <property type="project" value="UniProtKB-KW"/>
</dbReference>
<dbReference type="GO" id="GO:0031676">
    <property type="term" value="C:plasma membrane-derived thylakoid membrane"/>
    <property type="evidence" value="ECO:0007669"/>
    <property type="project" value="UniProtKB-SubCell"/>
</dbReference>
<dbReference type="GO" id="GO:0015979">
    <property type="term" value="P:photosynthesis"/>
    <property type="evidence" value="ECO:0007669"/>
    <property type="project" value="UniProtKB-KW"/>
</dbReference>
<dbReference type="HAMAP" id="MF_01388">
    <property type="entry name" value="PSII_PsbX_2"/>
    <property type="match status" value="1"/>
</dbReference>
<dbReference type="InterPro" id="IPR009518">
    <property type="entry name" value="PSII_PsbX"/>
</dbReference>
<dbReference type="InterPro" id="IPR023428">
    <property type="entry name" value="PSII_PsbX_type_2_subfam"/>
</dbReference>
<dbReference type="Pfam" id="PF06596">
    <property type="entry name" value="PsbX"/>
    <property type="match status" value="1"/>
</dbReference>
<feature type="chain" id="PRO_0000345374" description="Photosystem II reaction center X protein">
    <location>
        <begin position="1"/>
        <end position="62"/>
    </location>
</feature>
<feature type="transmembrane region" description="Helical" evidence="1">
    <location>
        <begin position="26"/>
        <end position="46"/>
    </location>
</feature>
<sequence length="62" mass="6643">MIQISDLLLIANVSPEVAGSSGFNMIASFFAAALLIVIPAATFLIFVSQNDSLDRTSATRRR</sequence>
<protein>
    <recommendedName>
        <fullName evidence="1">Photosystem II reaction center X protein</fullName>
    </recommendedName>
</protein>
<gene>
    <name evidence="1" type="primary">psbX</name>
    <name type="ordered locus">P9515_00711</name>
</gene>
<comment type="function">
    <text evidence="1">Involved in the binding and/or turnover of quinones at the Q(B) site of Photosystem II.</text>
</comment>
<comment type="subunit">
    <text evidence="1">PSII consists of a core antenna complex that captures photons, and an electron transfer chain that converts photonic excitation into a charge separation. PSII forms dimeric complexes.</text>
</comment>
<comment type="subcellular location">
    <subcellularLocation>
        <location evidence="1">Cellular thylakoid membrane</location>
        <topology evidence="1">Single-pass membrane protein</topology>
    </subcellularLocation>
</comment>
<comment type="similarity">
    <text evidence="1">Belongs to the PsbX family. Type 2 subfamily.</text>
</comment>
<reference key="1">
    <citation type="journal article" date="2007" name="PLoS Genet.">
        <title>Patterns and implications of gene gain and loss in the evolution of Prochlorococcus.</title>
        <authorList>
            <person name="Kettler G.C."/>
            <person name="Martiny A.C."/>
            <person name="Huang K."/>
            <person name="Zucker J."/>
            <person name="Coleman M.L."/>
            <person name="Rodrigue S."/>
            <person name="Chen F."/>
            <person name="Lapidus A."/>
            <person name="Ferriera S."/>
            <person name="Johnson J."/>
            <person name="Steglich C."/>
            <person name="Church G.M."/>
            <person name="Richardson P."/>
            <person name="Chisholm S.W."/>
        </authorList>
    </citation>
    <scope>NUCLEOTIDE SEQUENCE [LARGE SCALE GENOMIC DNA]</scope>
    <source>
        <strain>MIT 9515</strain>
    </source>
</reference>
<keyword id="KW-0472">Membrane</keyword>
<keyword id="KW-0602">Photosynthesis</keyword>
<keyword id="KW-0604">Photosystem II</keyword>
<keyword id="KW-0793">Thylakoid</keyword>
<keyword id="KW-0812">Transmembrane</keyword>
<keyword id="KW-1133">Transmembrane helix</keyword>
<evidence type="ECO:0000255" key="1">
    <source>
        <dbReference type="HAMAP-Rule" id="MF_01388"/>
    </source>
</evidence>
<organism>
    <name type="scientific">Prochlorococcus marinus (strain MIT 9515)</name>
    <dbReference type="NCBI Taxonomy" id="167542"/>
    <lineage>
        <taxon>Bacteria</taxon>
        <taxon>Bacillati</taxon>
        <taxon>Cyanobacteriota</taxon>
        <taxon>Cyanophyceae</taxon>
        <taxon>Synechococcales</taxon>
        <taxon>Prochlorococcaceae</taxon>
        <taxon>Prochlorococcus</taxon>
    </lineage>
</organism>
<accession>A2BU19</accession>
<proteinExistence type="inferred from homology"/>
<name>PSBX_PROM5</name>